<proteinExistence type="inferred from homology"/>
<organism>
    <name type="scientific">Arthrobacter sp. (strain FB24)</name>
    <dbReference type="NCBI Taxonomy" id="290399"/>
    <lineage>
        <taxon>Bacteria</taxon>
        <taxon>Bacillati</taxon>
        <taxon>Actinomycetota</taxon>
        <taxon>Actinomycetes</taxon>
        <taxon>Micrococcales</taxon>
        <taxon>Micrococcaceae</taxon>
        <taxon>Arthrobacter</taxon>
    </lineage>
</organism>
<comment type="function">
    <text evidence="1">Catalyzes the phosphorylation of the position 2 hydroxy group of 4-diphosphocytidyl-2C-methyl-D-erythritol.</text>
</comment>
<comment type="catalytic activity">
    <reaction evidence="1">
        <text>4-CDP-2-C-methyl-D-erythritol + ATP = 4-CDP-2-C-methyl-D-erythritol 2-phosphate + ADP + H(+)</text>
        <dbReference type="Rhea" id="RHEA:18437"/>
        <dbReference type="ChEBI" id="CHEBI:15378"/>
        <dbReference type="ChEBI" id="CHEBI:30616"/>
        <dbReference type="ChEBI" id="CHEBI:57823"/>
        <dbReference type="ChEBI" id="CHEBI:57919"/>
        <dbReference type="ChEBI" id="CHEBI:456216"/>
        <dbReference type="EC" id="2.7.1.148"/>
    </reaction>
</comment>
<comment type="pathway">
    <text evidence="1">Isoprenoid biosynthesis; isopentenyl diphosphate biosynthesis via DXP pathway; isopentenyl diphosphate from 1-deoxy-D-xylulose 5-phosphate: step 3/6.</text>
</comment>
<comment type="similarity">
    <text evidence="1">Belongs to the GHMP kinase family. IspE subfamily.</text>
</comment>
<feature type="chain" id="PRO_0000335699" description="4-diphosphocytidyl-2-C-methyl-D-erythritol kinase">
    <location>
        <begin position="1"/>
        <end position="320"/>
    </location>
</feature>
<feature type="active site" evidence="1">
    <location>
        <position position="20"/>
    </location>
</feature>
<feature type="active site" evidence="1">
    <location>
        <position position="154"/>
    </location>
</feature>
<feature type="binding site" evidence="1">
    <location>
        <begin position="112"/>
        <end position="122"/>
    </location>
    <ligand>
        <name>ATP</name>
        <dbReference type="ChEBI" id="CHEBI:30616"/>
    </ligand>
</feature>
<gene>
    <name evidence="1" type="primary">ispE</name>
    <name type="ordered locus">Arth_1214</name>
</gene>
<sequence>MNAVRGRFAARTVRVKAPGKINVSLDVGPLREDGYHSVASVYLAVSLYEEVAATSTATEGITVSISPASTLDLSDVDIPLDERNLAYKAAAIMADVSEHSTGVHLEITKRVPVAGGMGGGSADAAATLLACDALWNSGLSRDELAHLAAELGADVPFALLGGTAVGLGVGDELSPALAKAQMDWVLVTADYGLSTPEVFRTLDRLRLAEGLTVDEPAAVDPKILQALRSGDADALSRVLVNDLQRASIELAPGLRDTLGLGESCGAIAGLVSGSGPTVALLTHSPEAAAGLAEDLGHHGLNALAVHGPVPGARIISDTLL</sequence>
<dbReference type="EC" id="2.7.1.148" evidence="1"/>
<dbReference type="EMBL" id="CP000454">
    <property type="protein sequence ID" value="ABK02608.1"/>
    <property type="molecule type" value="Genomic_DNA"/>
</dbReference>
<dbReference type="RefSeq" id="WP_011691075.1">
    <property type="nucleotide sequence ID" value="NC_008541.1"/>
</dbReference>
<dbReference type="SMR" id="A0JU88"/>
<dbReference type="STRING" id="290399.Arth_1214"/>
<dbReference type="KEGG" id="art:Arth_1214"/>
<dbReference type="eggNOG" id="COG1947">
    <property type="taxonomic scope" value="Bacteria"/>
</dbReference>
<dbReference type="HOGENOM" id="CLU_053057_1_1_11"/>
<dbReference type="OrthoDB" id="3173073at2"/>
<dbReference type="UniPathway" id="UPA00056">
    <property type="reaction ID" value="UER00094"/>
</dbReference>
<dbReference type="Proteomes" id="UP000000754">
    <property type="component" value="Chromosome"/>
</dbReference>
<dbReference type="GO" id="GO:0050515">
    <property type="term" value="F:4-(cytidine 5'-diphospho)-2-C-methyl-D-erythritol kinase activity"/>
    <property type="evidence" value="ECO:0007669"/>
    <property type="project" value="UniProtKB-UniRule"/>
</dbReference>
<dbReference type="GO" id="GO:0005524">
    <property type="term" value="F:ATP binding"/>
    <property type="evidence" value="ECO:0007669"/>
    <property type="project" value="UniProtKB-UniRule"/>
</dbReference>
<dbReference type="GO" id="GO:0019288">
    <property type="term" value="P:isopentenyl diphosphate biosynthetic process, methylerythritol 4-phosphate pathway"/>
    <property type="evidence" value="ECO:0007669"/>
    <property type="project" value="UniProtKB-UniRule"/>
</dbReference>
<dbReference type="GO" id="GO:0016114">
    <property type="term" value="P:terpenoid biosynthetic process"/>
    <property type="evidence" value="ECO:0007669"/>
    <property type="project" value="InterPro"/>
</dbReference>
<dbReference type="Gene3D" id="3.30.230.10">
    <property type="match status" value="1"/>
</dbReference>
<dbReference type="Gene3D" id="3.30.70.890">
    <property type="entry name" value="GHMP kinase, C-terminal domain"/>
    <property type="match status" value="1"/>
</dbReference>
<dbReference type="HAMAP" id="MF_00061">
    <property type="entry name" value="IspE"/>
    <property type="match status" value="1"/>
</dbReference>
<dbReference type="InterPro" id="IPR013750">
    <property type="entry name" value="GHMP_kinase_C_dom"/>
</dbReference>
<dbReference type="InterPro" id="IPR036554">
    <property type="entry name" value="GHMP_kinase_C_sf"/>
</dbReference>
<dbReference type="InterPro" id="IPR006204">
    <property type="entry name" value="GHMP_kinase_N_dom"/>
</dbReference>
<dbReference type="InterPro" id="IPR004424">
    <property type="entry name" value="IspE"/>
</dbReference>
<dbReference type="InterPro" id="IPR020568">
    <property type="entry name" value="Ribosomal_Su5_D2-typ_SF"/>
</dbReference>
<dbReference type="InterPro" id="IPR014721">
    <property type="entry name" value="Ribsml_uS5_D2-typ_fold_subgr"/>
</dbReference>
<dbReference type="NCBIfam" id="TIGR00154">
    <property type="entry name" value="ispE"/>
    <property type="match status" value="1"/>
</dbReference>
<dbReference type="NCBIfam" id="NF002870">
    <property type="entry name" value="PRK03188.1"/>
    <property type="match status" value="1"/>
</dbReference>
<dbReference type="PANTHER" id="PTHR43527">
    <property type="entry name" value="4-DIPHOSPHOCYTIDYL-2-C-METHYL-D-ERYTHRITOL KINASE, CHLOROPLASTIC"/>
    <property type="match status" value="1"/>
</dbReference>
<dbReference type="PANTHER" id="PTHR43527:SF2">
    <property type="entry name" value="4-DIPHOSPHOCYTIDYL-2-C-METHYL-D-ERYTHRITOL KINASE, CHLOROPLASTIC"/>
    <property type="match status" value="1"/>
</dbReference>
<dbReference type="Pfam" id="PF08544">
    <property type="entry name" value="GHMP_kinases_C"/>
    <property type="match status" value="1"/>
</dbReference>
<dbReference type="Pfam" id="PF00288">
    <property type="entry name" value="GHMP_kinases_N"/>
    <property type="match status" value="1"/>
</dbReference>
<dbReference type="PIRSF" id="PIRSF010376">
    <property type="entry name" value="IspE"/>
    <property type="match status" value="1"/>
</dbReference>
<dbReference type="SUPFAM" id="SSF55060">
    <property type="entry name" value="GHMP Kinase, C-terminal domain"/>
    <property type="match status" value="1"/>
</dbReference>
<dbReference type="SUPFAM" id="SSF54211">
    <property type="entry name" value="Ribosomal protein S5 domain 2-like"/>
    <property type="match status" value="1"/>
</dbReference>
<protein>
    <recommendedName>
        <fullName evidence="1">4-diphosphocytidyl-2-C-methyl-D-erythritol kinase</fullName>
        <shortName evidence="1">CMK</shortName>
        <ecNumber evidence="1">2.7.1.148</ecNumber>
    </recommendedName>
    <alternativeName>
        <fullName evidence="1">4-(cytidine-5'-diphospho)-2-C-methyl-D-erythritol kinase</fullName>
    </alternativeName>
</protein>
<evidence type="ECO:0000255" key="1">
    <source>
        <dbReference type="HAMAP-Rule" id="MF_00061"/>
    </source>
</evidence>
<name>ISPE_ARTS2</name>
<keyword id="KW-0067">ATP-binding</keyword>
<keyword id="KW-0414">Isoprene biosynthesis</keyword>
<keyword id="KW-0418">Kinase</keyword>
<keyword id="KW-0547">Nucleotide-binding</keyword>
<keyword id="KW-1185">Reference proteome</keyword>
<keyword id="KW-0808">Transferase</keyword>
<accession>A0JU88</accession>
<reference key="1">
    <citation type="journal article" date="2013" name="Stand. Genomic Sci.">
        <title>Complete genome sequence of Arthrobacter sp. strain FB24.</title>
        <authorList>
            <person name="Nakatsu C.H."/>
            <person name="Barabote R."/>
            <person name="Thompson S."/>
            <person name="Bruce D."/>
            <person name="Detter C."/>
            <person name="Brettin T."/>
            <person name="Han C."/>
            <person name="Beasley F."/>
            <person name="Chen W."/>
            <person name="Konopka A."/>
            <person name="Xie G."/>
        </authorList>
    </citation>
    <scope>NUCLEOTIDE SEQUENCE [LARGE SCALE GENOMIC DNA]</scope>
    <source>
        <strain>FB24</strain>
    </source>
</reference>